<protein>
    <recommendedName>
        <fullName evidence="1">Uncharacterized MFS-type transporter YcaD</fullName>
    </recommendedName>
</protein>
<reference key="1">
    <citation type="journal article" date="2009" name="J. Bacteriol.">
        <title>Genomic sequencing reveals regulatory mutations and recombinational events in the widely used MC4100 lineage of Escherichia coli K-12.</title>
        <authorList>
            <person name="Ferenci T."/>
            <person name="Zhou Z."/>
            <person name="Betteridge T."/>
            <person name="Ren Y."/>
            <person name="Liu Y."/>
            <person name="Feng L."/>
            <person name="Reeves P.R."/>
            <person name="Wang L."/>
        </authorList>
    </citation>
    <scope>NUCLEOTIDE SEQUENCE [LARGE SCALE GENOMIC DNA]</scope>
    <source>
        <strain>K12 / MC4100 / BW2952</strain>
    </source>
</reference>
<comment type="subcellular location">
    <subcellularLocation>
        <location evidence="1">Cell inner membrane</location>
        <topology evidence="1">Multi-pass membrane protein</topology>
    </subcellularLocation>
</comment>
<comment type="similarity">
    <text evidence="1">Belongs to the major facilitator superfamily. YcaD (TC 2.A.1.26) family.</text>
</comment>
<accession>C4ZQ24</accession>
<name>YCAD_ECOBW</name>
<keyword id="KW-0997">Cell inner membrane</keyword>
<keyword id="KW-1003">Cell membrane</keyword>
<keyword id="KW-0472">Membrane</keyword>
<keyword id="KW-0812">Transmembrane</keyword>
<keyword id="KW-1133">Transmembrane helix</keyword>
<keyword id="KW-0813">Transport</keyword>
<gene>
    <name evidence="1" type="primary">ycaD</name>
    <name type="ordered locus">BWG_0750</name>
</gene>
<dbReference type="EMBL" id="CP001396">
    <property type="protein sequence ID" value="ACR65192.1"/>
    <property type="molecule type" value="Genomic_DNA"/>
</dbReference>
<dbReference type="RefSeq" id="WP_000109259.1">
    <property type="nucleotide sequence ID" value="NC_012759.1"/>
</dbReference>
<dbReference type="SMR" id="C4ZQ24"/>
<dbReference type="KEGG" id="ebw:BWG_0750"/>
<dbReference type="HOGENOM" id="CLU_035018_1_2_6"/>
<dbReference type="GO" id="GO:0005886">
    <property type="term" value="C:plasma membrane"/>
    <property type="evidence" value="ECO:0007669"/>
    <property type="project" value="UniProtKB-SubCell"/>
</dbReference>
<dbReference type="GO" id="GO:0022857">
    <property type="term" value="F:transmembrane transporter activity"/>
    <property type="evidence" value="ECO:0007669"/>
    <property type="project" value="UniProtKB-UniRule"/>
</dbReference>
<dbReference type="CDD" id="cd17477">
    <property type="entry name" value="MFS_YcaD_like"/>
    <property type="match status" value="1"/>
</dbReference>
<dbReference type="FunFam" id="1.20.1250.20:FF:000041">
    <property type="entry name" value="Uncharacterized MFS-type transporter YcaD"/>
    <property type="match status" value="1"/>
</dbReference>
<dbReference type="FunFam" id="1.20.1250.20:FF:000066">
    <property type="entry name" value="Uncharacterized MFS-type transporter YcaD"/>
    <property type="match status" value="1"/>
</dbReference>
<dbReference type="Gene3D" id="1.20.1250.20">
    <property type="entry name" value="MFS general substrate transporter like domains"/>
    <property type="match status" value="2"/>
</dbReference>
<dbReference type="HAMAP" id="MF_01149">
    <property type="entry name" value="MFS_YcaD"/>
    <property type="match status" value="1"/>
</dbReference>
<dbReference type="InterPro" id="IPR011701">
    <property type="entry name" value="MFS"/>
</dbReference>
<dbReference type="InterPro" id="IPR020846">
    <property type="entry name" value="MFS_dom"/>
</dbReference>
<dbReference type="InterPro" id="IPR036259">
    <property type="entry name" value="MFS_trans_sf"/>
</dbReference>
<dbReference type="InterPro" id="IPR023745">
    <property type="entry name" value="MFS_YcaD"/>
</dbReference>
<dbReference type="InterPro" id="IPR047200">
    <property type="entry name" value="MFS_YcaD-like"/>
</dbReference>
<dbReference type="NCBIfam" id="NF002962">
    <property type="entry name" value="PRK03633.1"/>
    <property type="match status" value="1"/>
</dbReference>
<dbReference type="PANTHER" id="PTHR23521">
    <property type="entry name" value="TRANSPORTER MFS SUPERFAMILY"/>
    <property type="match status" value="1"/>
</dbReference>
<dbReference type="PANTHER" id="PTHR23521:SF2">
    <property type="entry name" value="TRANSPORTER MFS SUPERFAMILY"/>
    <property type="match status" value="1"/>
</dbReference>
<dbReference type="Pfam" id="PF07690">
    <property type="entry name" value="MFS_1"/>
    <property type="match status" value="1"/>
</dbReference>
<dbReference type="SUPFAM" id="SSF103473">
    <property type="entry name" value="MFS general substrate transporter"/>
    <property type="match status" value="1"/>
</dbReference>
<dbReference type="PROSITE" id="PS50850">
    <property type="entry name" value="MFS"/>
    <property type="match status" value="1"/>
</dbReference>
<proteinExistence type="inferred from homology"/>
<sequence>MSTYTQPVMLLLSGLLLLTLAIAVLNTLVPLWLAQEHMSTWQVGVVSSSYFTGNLVGTLLTGYVIKRIGFNRSYYLASFIFAAGCAGLGLMIGFWSWLAWRFVAGVGCAMIWVVVESALMCSGTSRNRGRLLAAYMMVYYVGTFLGQLLVSKVSTELMSVLPWVTGLTLAGILPLLFTRVLNQQAENHDSTSITSMLKLRQARLGVNGCIISGIVLGSLYGLMPLYLNHKGVSNASIGFWMAVLVSAGILGQWPIGRLADKFGRLLVLRVQVFVVILGSIAMLSQAAMAPALFILGAAGFTLYPVAMAWACEKVEHHQLVAMNQALLLSYTVGSLLGPSFTAMLMQNFSDNLLFIMIASVSFIYLLMLLRNAGHTPKPVAHV</sequence>
<evidence type="ECO:0000255" key="1">
    <source>
        <dbReference type="HAMAP-Rule" id="MF_01149"/>
    </source>
</evidence>
<organism>
    <name type="scientific">Escherichia coli (strain K12 / MC4100 / BW2952)</name>
    <dbReference type="NCBI Taxonomy" id="595496"/>
    <lineage>
        <taxon>Bacteria</taxon>
        <taxon>Pseudomonadati</taxon>
        <taxon>Pseudomonadota</taxon>
        <taxon>Gammaproteobacteria</taxon>
        <taxon>Enterobacterales</taxon>
        <taxon>Enterobacteriaceae</taxon>
        <taxon>Escherichia</taxon>
    </lineage>
</organism>
<feature type="chain" id="PRO_1000213663" description="Uncharacterized MFS-type transporter YcaD">
    <location>
        <begin position="1"/>
        <end position="382"/>
    </location>
</feature>
<feature type="transmembrane region" description="Helical" evidence="1">
    <location>
        <begin position="14"/>
        <end position="34"/>
    </location>
</feature>
<feature type="transmembrane region" description="Helical" evidence="1">
    <location>
        <begin position="45"/>
        <end position="65"/>
    </location>
</feature>
<feature type="transmembrane region" description="Helical" evidence="1">
    <location>
        <begin position="79"/>
        <end position="99"/>
    </location>
</feature>
<feature type="transmembrane region" description="Helical" evidence="1">
    <location>
        <begin position="102"/>
        <end position="122"/>
    </location>
</feature>
<feature type="transmembrane region" description="Helical" evidence="1">
    <location>
        <begin position="131"/>
        <end position="151"/>
    </location>
</feature>
<feature type="transmembrane region" description="Helical" evidence="1">
    <location>
        <begin position="157"/>
        <end position="177"/>
    </location>
</feature>
<feature type="transmembrane region" description="Helical" evidence="1">
    <location>
        <begin position="204"/>
        <end position="224"/>
    </location>
</feature>
<feature type="transmembrane region" description="Helical" evidence="1">
    <location>
        <begin position="235"/>
        <end position="255"/>
    </location>
</feature>
<feature type="transmembrane region" description="Helical" evidence="1">
    <location>
        <begin position="270"/>
        <end position="290"/>
    </location>
</feature>
<feature type="transmembrane region" description="Helical" evidence="1">
    <location>
        <begin position="291"/>
        <end position="311"/>
    </location>
</feature>
<feature type="transmembrane region" description="Helical" evidence="1">
    <location>
        <begin position="325"/>
        <end position="345"/>
    </location>
</feature>
<feature type="transmembrane region" description="Helical" evidence="1">
    <location>
        <begin position="348"/>
        <end position="368"/>
    </location>
</feature>